<comment type="similarity">
    <text evidence="1">Belongs to the bacterial ribosomal protein bL33 family.</text>
</comment>
<evidence type="ECO:0000305" key="1"/>
<dbReference type="EMBL" id="AE000520">
    <property type="protein sequence ID" value="AAC65222.1"/>
    <property type="molecule type" value="Genomic_DNA"/>
</dbReference>
<dbReference type="PIR" id="D71349">
    <property type="entry name" value="D71349"/>
</dbReference>
<dbReference type="RefSeq" id="WP_010881682.1">
    <property type="nucleotide sequence ID" value="NC_021490.2"/>
</dbReference>
<dbReference type="SMR" id="O83262"/>
<dbReference type="IntAct" id="O83262">
    <property type="interactions" value="20"/>
</dbReference>
<dbReference type="STRING" id="243276.TP_0234"/>
<dbReference type="EnsemblBacteria" id="AAC65222">
    <property type="protein sequence ID" value="AAC65222"/>
    <property type="gene ID" value="TP_0234"/>
</dbReference>
<dbReference type="GeneID" id="93876025"/>
<dbReference type="KEGG" id="tpa:TP_0234"/>
<dbReference type="KEGG" id="tpw:TPANIC_0234"/>
<dbReference type="eggNOG" id="COG0267">
    <property type="taxonomic scope" value="Bacteria"/>
</dbReference>
<dbReference type="HOGENOM" id="CLU_190949_0_2_12"/>
<dbReference type="Proteomes" id="UP000000811">
    <property type="component" value="Chromosome"/>
</dbReference>
<dbReference type="GO" id="GO:0005737">
    <property type="term" value="C:cytoplasm"/>
    <property type="evidence" value="ECO:0007669"/>
    <property type="project" value="UniProtKB-ARBA"/>
</dbReference>
<dbReference type="GO" id="GO:1990904">
    <property type="term" value="C:ribonucleoprotein complex"/>
    <property type="evidence" value="ECO:0007669"/>
    <property type="project" value="UniProtKB-KW"/>
</dbReference>
<dbReference type="GO" id="GO:0005840">
    <property type="term" value="C:ribosome"/>
    <property type="evidence" value="ECO:0007669"/>
    <property type="project" value="UniProtKB-KW"/>
</dbReference>
<dbReference type="GO" id="GO:0003735">
    <property type="term" value="F:structural constituent of ribosome"/>
    <property type="evidence" value="ECO:0007669"/>
    <property type="project" value="InterPro"/>
</dbReference>
<dbReference type="GO" id="GO:0006412">
    <property type="term" value="P:translation"/>
    <property type="evidence" value="ECO:0007669"/>
    <property type="project" value="UniProtKB-UniRule"/>
</dbReference>
<dbReference type="Gene3D" id="2.20.28.120">
    <property type="entry name" value="Ribosomal protein L33"/>
    <property type="match status" value="1"/>
</dbReference>
<dbReference type="HAMAP" id="MF_00294">
    <property type="entry name" value="Ribosomal_bL33"/>
    <property type="match status" value="1"/>
</dbReference>
<dbReference type="InterPro" id="IPR001705">
    <property type="entry name" value="Ribosomal_bL33"/>
</dbReference>
<dbReference type="InterPro" id="IPR018264">
    <property type="entry name" value="Ribosomal_bL33_CS"/>
</dbReference>
<dbReference type="InterPro" id="IPR038584">
    <property type="entry name" value="Ribosomal_bL33_sf"/>
</dbReference>
<dbReference type="InterPro" id="IPR011332">
    <property type="entry name" value="Ribosomal_zn-bd"/>
</dbReference>
<dbReference type="NCBIfam" id="NF001764">
    <property type="entry name" value="PRK00504.1"/>
    <property type="match status" value="1"/>
</dbReference>
<dbReference type="NCBIfam" id="NF001860">
    <property type="entry name" value="PRK00595.1"/>
    <property type="match status" value="1"/>
</dbReference>
<dbReference type="NCBIfam" id="TIGR01023">
    <property type="entry name" value="rpmG_bact"/>
    <property type="match status" value="1"/>
</dbReference>
<dbReference type="PANTHER" id="PTHR43168">
    <property type="entry name" value="50S RIBOSOMAL PROTEIN L33, CHLOROPLASTIC"/>
    <property type="match status" value="1"/>
</dbReference>
<dbReference type="PANTHER" id="PTHR43168:SF2">
    <property type="entry name" value="LARGE RIBOSOMAL SUBUNIT PROTEIN BL33C"/>
    <property type="match status" value="1"/>
</dbReference>
<dbReference type="Pfam" id="PF00471">
    <property type="entry name" value="Ribosomal_L33"/>
    <property type="match status" value="1"/>
</dbReference>
<dbReference type="SUPFAM" id="SSF57829">
    <property type="entry name" value="Zn-binding ribosomal proteins"/>
    <property type="match status" value="1"/>
</dbReference>
<dbReference type="PROSITE" id="PS00582">
    <property type="entry name" value="RIBOSOMAL_L33"/>
    <property type="match status" value="1"/>
</dbReference>
<organism>
    <name type="scientific">Treponema pallidum (strain Nichols)</name>
    <dbReference type="NCBI Taxonomy" id="243276"/>
    <lineage>
        <taxon>Bacteria</taxon>
        <taxon>Pseudomonadati</taxon>
        <taxon>Spirochaetota</taxon>
        <taxon>Spirochaetia</taxon>
        <taxon>Spirochaetales</taxon>
        <taxon>Treponemataceae</taxon>
        <taxon>Treponema</taxon>
    </lineage>
</organism>
<proteinExistence type="inferred from homology"/>
<protein>
    <recommendedName>
        <fullName evidence="1">Large ribosomal subunit protein bL33</fullName>
    </recommendedName>
    <alternativeName>
        <fullName>50S ribosomal protein L33</fullName>
    </alternativeName>
</protein>
<feature type="chain" id="PRO_0000170259" description="Large ribosomal subunit protein bL33">
    <location>
        <begin position="1"/>
        <end position="56"/>
    </location>
</feature>
<gene>
    <name type="primary">rpmG</name>
    <name type="ordered locus">TP_0234</name>
</gene>
<reference key="1">
    <citation type="journal article" date="1998" name="Science">
        <title>Complete genome sequence of Treponema pallidum, the syphilis spirochete.</title>
        <authorList>
            <person name="Fraser C.M."/>
            <person name="Norris S.J."/>
            <person name="Weinstock G.M."/>
            <person name="White O."/>
            <person name="Sutton G.G."/>
            <person name="Dodson R.J."/>
            <person name="Gwinn M.L."/>
            <person name="Hickey E.K."/>
            <person name="Clayton R.A."/>
            <person name="Ketchum K.A."/>
            <person name="Sodergren E."/>
            <person name="Hardham J.M."/>
            <person name="McLeod M.P."/>
            <person name="Salzberg S.L."/>
            <person name="Peterson J.D."/>
            <person name="Khalak H.G."/>
            <person name="Richardson D.L."/>
            <person name="Howell J.K."/>
            <person name="Chidambaram M."/>
            <person name="Utterback T.R."/>
            <person name="McDonald L.A."/>
            <person name="Artiach P."/>
            <person name="Bowman C."/>
            <person name="Cotton M.D."/>
            <person name="Fujii C."/>
            <person name="Garland S.A."/>
            <person name="Hatch B."/>
            <person name="Horst K."/>
            <person name="Roberts K.M."/>
            <person name="Sandusky M."/>
            <person name="Weidman J.F."/>
            <person name="Smith H.O."/>
            <person name="Venter J.C."/>
        </authorList>
    </citation>
    <scope>NUCLEOTIDE SEQUENCE [LARGE SCALE GENOMIC DNA]</scope>
    <source>
        <strain>Nichols</strain>
    </source>
</reference>
<keyword id="KW-1185">Reference proteome</keyword>
<keyword id="KW-0687">Ribonucleoprotein</keyword>
<keyword id="KW-0689">Ribosomal protein</keyword>
<sequence length="56" mass="6820">MAKRTAVELIALQCTGCKRRNYTTSRNRRNVQEKLELRKYCPFERRRVLHREAKIK</sequence>
<accession>O83262</accession>
<name>RL33_TREPA</name>